<sequence>EVKQESLSGITEGEAKEFHKIFTSSILVFFGVAAFAHLLVWIWRPWVPGPNGYS</sequence>
<protein>
    <recommendedName>
        <fullName>Light-harvesting protein B-870 beta chain</fullName>
    </recommendedName>
    <alternativeName>
        <fullName>Antenna pigment protein beta chain</fullName>
    </alternativeName>
    <alternativeName>
        <fullName>LH-1</fullName>
    </alternativeName>
</protein>
<accession>P0C190</accession>
<accession>P04125</accession>
<name>LHB_RHORU</name>
<reference key="1">
    <citation type="journal article" date="1984" name="Hoppe-Seyler's Z. Physiol. Chem.">
        <title>The light-harvesting polypeptides of Rhodospirillum rubrum. I. The amino-acid sequence of the second light-harvestng polypeptide B 880-beta (B 870-beta) of Rhodospirillum rubrum S 1 and the carotenoidless mutant G-9+.</title>
        <authorList>
            <person name="Brunisholz R.A."/>
            <person name="Suter F."/>
            <person name="Zuber H."/>
        </authorList>
    </citation>
    <scope>PROTEIN SEQUENCE</scope>
    <source>
        <strain>G-9+</strain>
    </source>
</reference>
<organism>
    <name type="scientific">Rhodospirillum rubrum</name>
    <dbReference type="NCBI Taxonomy" id="1085"/>
    <lineage>
        <taxon>Bacteria</taxon>
        <taxon>Pseudomonadati</taxon>
        <taxon>Pseudomonadota</taxon>
        <taxon>Alphaproteobacteria</taxon>
        <taxon>Rhodospirillales</taxon>
        <taxon>Rhodospirillaceae</taxon>
        <taxon>Rhodospirillum</taxon>
    </lineage>
</organism>
<feature type="chain" id="PRO_0000001630" description="Light-harvesting protein B-870 beta chain">
    <location>
        <begin position="1"/>
        <end position="54"/>
    </location>
</feature>
<feature type="topological domain" description="Cytoplasmic" evidence="1">
    <location>
        <begin position="1"/>
        <end position="20"/>
    </location>
</feature>
<feature type="transmembrane region" description="Helical" evidence="1">
    <location>
        <begin position="21"/>
        <end position="43"/>
    </location>
</feature>
<feature type="topological domain" description="Periplasmic" evidence="1">
    <location>
        <begin position="44"/>
        <end position="54"/>
    </location>
</feature>
<feature type="binding site" description="axial binding residue" evidence="1">
    <location>
        <position position="19"/>
    </location>
    <ligand>
        <name>a bacteriochlorophyll</name>
        <dbReference type="ChEBI" id="CHEBI:38201"/>
    </ligand>
    <ligandPart>
        <name>Mg</name>
        <dbReference type="ChEBI" id="CHEBI:25107"/>
    </ligandPart>
</feature>
<feature type="binding site" description="axial binding residue" evidence="1">
    <location>
        <position position="37"/>
    </location>
    <ligand>
        <name>a bacteriochlorophyll</name>
        <dbReference type="ChEBI" id="CHEBI:38201"/>
    </ligand>
    <ligandPart>
        <name>Mg</name>
        <dbReference type="ChEBI" id="CHEBI:25107"/>
    </ligandPart>
</feature>
<feature type="helix" evidence="3">
    <location>
        <begin position="12"/>
        <end position="43"/>
    </location>
</feature>
<comment type="function">
    <text>Antenna complexes are light-harvesting systems, which transfer the excitation energy to the reaction centers.</text>
</comment>
<comment type="subunit">
    <text>The core complex is formed by different alpha and beta chains, binding bacteriochlorophyll molecules, and arranged most probably in tetrameric structures disposed around the reaction center. The non-pigmented gamma chains may constitute additional components.</text>
</comment>
<comment type="subcellular location">
    <subcellularLocation>
        <location>Cell inner membrane</location>
        <topology>Single-pass type II membrane protein</topology>
    </subcellularLocation>
</comment>
<comment type="similarity">
    <text evidence="2">Belongs to the antenna complex beta subunit family.</text>
</comment>
<keyword id="KW-0002">3D-structure</keyword>
<keyword id="KW-0042">Antenna complex</keyword>
<keyword id="KW-0076">Bacteriochlorophyll</keyword>
<keyword id="KW-0997">Cell inner membrane</keyword>
<keyword id="KW-1003">Cell membrane</keyword>
<keyword id="KW-0148">Chlorophyll</keyword>
<keyword id="KW-0157">Chromophore</keyword>
<keyword id="KW-0903">Direct protein sequencing</keyword>
<keyword id="KW-0437">Light-harvesting polypeptide</keyword>
<keyword id="KW-0460">Magnesium</keyword>
<keyword id="KW-0472">Membrane</keyword>
<keyword id="KW-0479">Metal-binding</keyword>
<keyword id="KW-0812">Transmembrane</keyword>
<keyword id="KW-1133">Transmembrane helix</keyword>
<proteinExistence type="evidence at protein level"/>
<evidence type="ECO:0000255" key="1"/>
<evidence type="ECO:0000305" key="2"/>
<evidence type="ECO:0007829" key="3">
    <source>
        <dbReference type="PDB" id="9K3Q"/>
    </source>
</evidence>
<dbReference type="PIR" id="A24206">
    <property type="entry name" value="A24206"/>
</dbReference>
<dbReference type="PDB" id="9K3Q">
    <property type="method" value="EM"/>
    <property type="resolution" value="3.02 A"/>
    <property type="chains" value="1/3/5/7/9/I/K/O/Q/S/U/W/Y/d/m/n=10-53"/>
</dbReference>
<dbReference type="PDBsum" id="9K3Q"/>
<dbReference type="BMRB" id="P0C190"/>
<dbReference type="EMDB" id="EMD-62025"/>
<dbReference type="SMR" id="P0C190"/>
<dbReference type="GO" id="GO:0005886">
    <property type="term" value="C:plasma membrane"/>
    <property type="evidence" value="ECO:0007669"/>
    <property type="project" value="UniProtKB-SubCell"/>
</dbReference>
<dbReference type="GO" id="GO:0030077">
    <property type="term" value="C:plasma membrane light-harvesting complex"/>
    <property type="evidence" value="ECO:0007669"/>
    <property type="project" value="InterPro"/>
</dbReference>
<dbReference type="GO" id="GO:0042314">
    <property type="term" value="F:bacteriochlorophyll binding"/>
    <property type="evidence" value="ECO:0007669"/>
    <property type="project" value="UniProtKB-KW"/>
</dbReference>
<dbReference type="GO" id="GO:0045156">
    <property type="term" value="F:electron transporter, transferring electrons within the cyclic electron transport pathway of photosynthesis activity"/>
    <property type="evidence" value="ECO:0007669"/>
    <property type="project" value="InterPro"/>
</dbReference>
<dbReference type="GO" id="GO:0046872">
    <property type="term" value="F:metal ion binding"/>
    <property type="evidence" value="ECO:0007669"/>
    <property type="project" value="UniProtKB-KW"/>
</dbReference>
<dbReference type="GO" id="GO:0019684">
    <property type="term" value="P:photosynthesis, light reaction"/>
    <property type="evidence" value="ECO:0007669"/>
    <property type="project" value="InterPro"/>
</dbReference>
<dbReference type="Gene3D" id="1.20.5.250">
    <property type="match status" value="1"/>
</dbReference>
<dbReference type="InterPro" id="IPR000066">
    <property type="entry name" value="Antenna_a/b"/>
</dbReference>
<dbReference type="InterPro" id="IPR023623">
    <property type="entry name" value="Antenna_beta_CS"/>
</dbReference>
<dbReference type="InterPro" id="IPR023624">
    <property type="entry name" value="Antenna_beta_dom_sf"/>
</dbReference>
<dbReference type="InterPro" id="IPR002362">
    <property type="entry name" value="LHB-1/5"/>
</dbReference>
<dbReference type="InterPro" id="IPR035889">
    <property type="entry name" value="Light-harvesting_complex"/>
</dbReference>
<dbReference type="NCBIfam" id="NF040862">
    <property type="entry name" value="pufB_517_ASD"/>
    <property type="match status" value="1"/>
</dbReference>
<dbReference type="Pfam" id="PF00556">
    <property type="entry name" value="LHC"/>
    <property type="match status" value="1"/>
</dbReference>
<dbReference type="PIRSF" id="PIRSF002900">
    <property type="entry name" value="Antenna_beta"/>
    <property type="match status" value="1"/>
</dbReference>
<dbReference type="PRINTS" id="PR00674">
    <property type="entry name" value="LIGHTHARVSTB"/>
</dbReference>
<dbReference type="SUPFAM" id="SSF56918">
    <property type="entry name" value="Light-harvesting complex subunits"/>
    <property type="match status" value="1"/>
</dbReference>
<dbReference type="PROSITE" id="PS00969">
    <property type="entry name" value="ANTENNA_COMP_BETA"/>
    <property type="match status" value="1"/>
</dbReference>